<reference key="1">
    <citation type="journal article" date="2006" name="J. Bacteriol.">
        <title>Comparative genomic analysis of 18 Pseudomonas aeruginosa bacteriophages.</title>
        <authorList>
            <person name="Kwan T."/>
            <person name="Liu J."/>
            <person name="Dubow M."/>
            <person name="Gros P."/>
            <person name="Pelletier J."/>
        </authorList>
    </citation>
    <scope>NUCLEOTIDE SEQUENCE [LARGE SCALE GENOMIC DNA]</scope>
</reference>
<reference key="2">
    <citation type="journal article" date="2018" name="Proc. Natl. Acad. Sci. U.S.A.">
        <title>Identification and biosynthesis of thymidine hypermodifications in the genomic DNA of widespread bacterial viruses.</title>
        <authorList>
            <person name="Lee Y.J."/>
            <person name="Dai N."/>
            <person name="Walsh S.E."/>
            <person name="Mueller S."/>
            <person name="Fraser M.E."/>
            <person name="Kauffman K.M."/>
            <person name="Guan C."/>
            <person name="Correa I.R. Jr."/>
            <person name="Weigele P.R."/>
        </authorList>
    </citation>
    <scope>FUNCTION</scope>
</reference>
<reference key="3">
    <citation type="journal article" date="2021" name="Nucleic Acids Res.">
        <title>Pathways of thymidine hypermodification.</title>
        <authorList>
            <person name="Lee Y.J."/>
            <person name="Dai N."/>
            <person name="Mueller S.I."/>
            <person name="Guan C."/>
            <person name="Parker M.J."/>
            <person name="Fraser M.E."/>
            <person name="Walsh S.E."/>
            <person name="Sridar J."/>
            <person name="Mulholland A."/>
            <person name="Nayak K."/>
            <person name="Sun Z."/>
            <person name="Lin Y.C."/>
            <person name="Comb D.G."/>
            <person name="Marks K."/>
            <person name="Gonzalez R."/>
            <person name="Dowling D.P."/>
            <person name="Bandarian V."/>
            <person name="Saleh L."/>
            <person name="Correa I.R."/>
            <person name="Weigele P.R."/>
        </authorList>
    </citation>
    <scope>FUNCTION</scope>
    <scope>CATALYTIC ACTIVITY</scope>
    <scope>MUTAGENESIS OF GLU-243 AND CYS-247</scope>
</reference>
<keyword id="KW-0945">Host-virus interaction</keyword>
<keyword id="KW-1090">Inhibition of host innate immune response by virus</keyword>
<keyword id="KW-1258">Restriction-modification system evasion by virus</keyword>
<keyword id="KW-0808">Transferase</keyword>
<keyword id="KW-0899">Viral immunoevasion</keyword>
<name>GLYDT_BPPM6</name>
<organism>
    <name type="scientific">Pseudomonas phage M6</name>
    <dbReference type="NCBI Taxonomy" id="2911432"/>
    <lineage>
        <taxon>Viruses</taxon>
        <taxon>Duplodnaviria</taxon>
        <taxon>Heunggongvirae</taxon>
        <taxon>Uroviricota</taxon>
        <taxon>Caudoviricetes</taxon>
        <taxon>Mesyanzhinovviridae</taxon>
        <taxon>Rabinowitzvirinae</taxon>
        <taxon>Yuavirus</taxon>
        <taxon>Pseudomonas virus M6</taxon>
    </lineage>
</organism>
<comment type="function">
    <text evidence="1 2">Transfers glycine to 5-phosphomethyl-2'-deoxyuridine (5-PmdU) to produce 5-Nalpha-glycinylthymidine (Nalpha-GlyT) as a step in the pathway leading to thymidine hypermodifications in the viral genome (PubMed:34522950). As a final result of the pathway of hypermodification, 5-aminoethyl-2'-deoxyuridine (5-NedU) substitutes for about 30% of thymidines in the viral DNA (PubMed:29555775, PubMed:34522950). These modifications probably prevent degradation of viral genome by the host restriction-modification antiviral defense system (PubMed:34522950).</text>
</comment>
<comment type="catalytic activity">
    <reaction evidence="2">
        <text>5-phosphomethyl-dUMP in DNA + glycine = 5-N(alpha)-glycyl-dTMP in DNA + phosphate</text>
        <dbReference type="Rhea" id="RHEA:71547"/>
        <dbReference type="Rhea" id="RHEA-COMP:18039"/>
        <dbReference type="Rhea" id="RHEA-COMP:18040"/>
        <dbReference type="ChEBI" id="CHEBI:43474"/>
        <dbReference type="ChEBI" id="CHEBI:57305"/>
        <dbReference type="ChEBI" id="CHEBI:190918"/>
        <dbReference type="ChEBI" id="CHEBI:190919"/>
    </reaction>
</comment>
<comment type="similarity">
    <text evidence="4">Belongs to the thymidine aminotransferase family.</text>
</comment>
<evidence type="ECO:0000269" key="1">
    <source>
    </source>
</evidence>
<evidence type="ECO:0000269" key="2">
    <source>
    </source>
</evidence>
<evidence type="ECO:0000303" key="3">
    <source>
    </source>
</evidence>
<evidence type="ECO:0000305" key="4"/>
<evidence type="ECO:0000305" key="5">
    <source>
    </source>
</evidence>
<protein>
    <recommendedName>
        <fullName evidence="4">Glycinyltransferase</fullName>
    </recommendedName>
    <alternativeName>
        <fullName evidence="3">Amino acid:DNA transferase</fullName>
        <shortName evidence="3">AADT</shortName>
    </alternativeName>
    <alternativeName>
        <fullName evidence="3">gp51</fullName>
    </alternativeName>
</protein>
<proteinExistence type="evidence at protein level"/>
<sequence>MSRNYPRLDIETFGRHLITTGDLDPIYTALVRAEEAGDFSVPQLCRWLLGYWCYYHAGVASFLSEKEGEEFWHWMMVAARNEEETPAGGRWPRGHERRHYRAKIAVDSVTSLQARYGDRPENMALYVGARATEDERLPFRTVSARAQEHNGFGPWIGFKIADMMDRVMEVPVDFDNAAVFMFKDPEKAAMMLWEQREAHKYPENAKPKREAILSGVADYLIGRFADLAAPPLSDRPVNIQEVETVLCKWKSHMNGHYPLWNDIREINGGLEPWAGRCSAARAFLNHMPKEQ</sequence>
<feature type="chain" id="PRO_0000456272" description="Glycinyltransferase">
    <location>
        <begin position="1"/>
        <end position="291"/>
    </location>
</feature>
<feature type="active site" evidence="5">
    <location>
        <position position="243"/>
    </location>
</feature>
<feature type="mutagenesis site" description="Complete loss of enzymatic activity." evidence="2">
    <original>E</original>
    <variation>A</variation>
    <location>
        <position position="243"/>
    </location>
</feature>
<feature type="mutagenesis site" description="Complete loss of enzymatic activity." evidence="2">
    <original>C</original>
    <variation>A</variation>
    <location>
        <position position="247"/>
    </location>
</feature>
<accession>P0DTK6</accession>
<organismHost>
    <name type="scientific">Pseudomonas aeruginosa</name>
    <dbReference type="NCBI Taxonomy" id="287"/>
</organismHost>
<dbReference type="EMBL" id="DQ163916">
    <property type="status" value="NOT_ANNOTATED_CDS"/>
    <property type="molecule type" value="Genomic_DNA"/>
</dbReference>
<dbReference type="RefSeq" id="YP_001294559.1">
    <property type="nucleotide sequence ID" value="NC_007809.1"/>
</dbReference>
<dbReference type="SMR" id="P0DTK6"/>
<dbReference type="GeneID" id="5237089"/>
<dbReference type="GO" id="GO:0016740">
    <property type="term" value="F:transferase activity"/>
    <property type="evidence" value="ECO:0007669"/>
    <property type="project" value="UniProtKB-KW"/>
</dbReference>
<dbReference type="GO" id="GO:0099018">
    <property type="term" value="P:symbiont-mediated evasion of host restriction-modification system"/>
    <property type="evidence" value="ECO:0007669"/>
    <property type="project" value="UniProtKB-KW"/>
</dbReference>
<dbReference type="GO" id="GO:0052170">
    <property type="term" value="P:symbiont-mediated suppression of host innate immune response"/>
    <property type="evidence" value="ECO:0007669"/>
    <property type="project" value="UniProtKB-KW"/>
</dbReference>
<dbReference type="InterPro" id="IPR040741">
    <property type="entry name" value="ADDT"/>
</dbReference>
<dbReference type="Pfam" id="PF18724">
    <property type="entry name" value="ADDT"/>
    <property type="match status" value="1"/>
</dbReference>